<comment type="function">
    <text evidence="1">This protein binds specifically to 23S rRNA; its binding is stimulated by other ribosomal proteins, e.g. L4, L17, and L20. It is important during the early stages of 50S assembly. It makes multiple contacts with different domains of the 23S rRNA in the assembled 50S subunit and ribosome (By similarity).</text>
</comment>
<comment type="function">
    <text evidence="1">The globular domain of the protein is located near the polypeptide exit tunnel on the outside of the subunit, while an extended beta-hairpin is found that lines the wall of the exit tunnel in the center of the 70S ribosome.</text>
</comment>
<comment type="subunit">
    <text evidence="1">Part of the 50S ribosomal subunit.</text>
</comment>
<comment type="similarity">
    <text evidence="1">Belongs to the universal ribosomal protein uL22 family.</text>
</comment>
<sequence length="113" mass="12996">MEARAVAKYIRISPRKARQVIDLIRGKDVEEALAILRYTPKKASYFIEKVLRSAIANAENNHDMSKENLYVAKAYVDQGPTLKRYNPRAQGRVDLWRVRTSHITIVVAERKEG</sequence>
<gene>
    <name evidence="1" type="primary">rplV</name>
    <name type="ordered locus">CHY_2304</name>
</gene>
<feature type="chain" id="PRO_0000243136" description="Large ribosomal subunit protein uL22">
    <location>
        <begin position="1"/>
        <end position="113"/>
    </location>
</feature>
<proteinExistence type="inferred from homology"/>
<reference key="1">
    <citation type="journal article" date="2005" name="PLoS Genet.">
        <title>Life in hot carbon monoxide: the complete genome sequence of Carboxydothermus hydrogenoformans Z-2901.</title>
        <authorList>
            <person name="Wu M."/>
            <person name="Ren Q."/>
            <person name="Durkin A.S."/>
            <person name="Daugherty S.C."/>
            <person name="Brinkac L.M."/>
            <person name="Dodson R.J."/>
            <person name="Madupu R."/>
            <person name="Sullivan S.A."/>
            <person name="Kolonay J.F."/>
            <person name="Nelson W.C."/>
            <person name="Tallon L.J."/>
            <person name="Jones K.M."/>
            <person name="Ulrich L.E."/>
            <person name="Gonzalez J.M."/>
            <person name="Zhulin I.B."/>
            <person name="Robb F.T."/>
            <person name="Eisen J.A."/>
        </authorList>
    </citation>
    <scope>NUCLEOTIDE SEQUENCE [LARGE SCALE GENOMIC DNA]</scope>
    <source>
        <strain>ATCC BAA-161 / DSM 6008 / Z-2901</strain>
    </source>
</reference>
<accession>Q3A9S1</accession>
<dbReference type="EMBL" id="CP000141">
    <property type="protein sequence ID" value="ABB15395.1"/>
    <property type="molecule type" value="Genomic_DNA"/>
</dbReference>
<dbReference type="RefSeq" id="WP_011345186.1">
    <property type="nucleotide sequence ID" value="NC_007503.1"/>
</dbReference>
<dbReference type="SMR" id="Q3A9S1"/>
<dbReference type="FunCoup" id="Q3A9S1">
    <property type="interactions" value="446"/>
</dbReference>
<dbReference type="STRING" id="246194.CHY_2304"/>
<dbReference type="KEGG" id="chy:CHY_2304"/>
<dbReference type="eggNOG" id="COG0091">
    <property type="taxonomic scope" value="Bacteria"/>
</dbReference>
<dbReference type="HOGENOM" id="CLU_083987_3_3_9"/>
<dbReference type="InParanoid" id="Q3A9S1"/>
<dbReference type="OrthoDB" id="9805969at2"/>
<dbReference type="Proteomes" id="UP000002706">
    <property type="component" value="Chromosome"/>
</dbReference>
<dbReference type="GO" id="GO:0022625">
    <property type="term" value="C:cytosolic large ribosomal subunit"/>
    <property type="evidence" value="ECO:0007669"/>
    <property type="project" value="TreeGrafter"/>
</dbReference>
<dbReference type="GO" id="GO:0019843">
    <property type="term" value="F:rRNA binding"/>
    <property type="evidence" value="ECO:0007669"/>
    <property type="project" value="UniProtKB-UniRule"/>
</dbReference>
<dbReference type="GO" id="GO:0003735">
    <property type="term" value="F:structural constituent of ribosome"/>
    <property type="evidence" value="ECO:0007669"/>
    <property type="project" value="InterPro"/>
</dbReference>
<dbReference type="GO" id="GO:0006412">
    <property type="term" value="P:translation"/>
    <property type="evidence" value="ECO:0007669"/>
    <property type="project" value="UniProtKB-UniRule"/>
</dbReference>
<dbReference type="CDD" id="cd00336">
    <property type="entry name" value="Ribosomal_L22"/>
    <property type="match status" value="1"/>
</dbReference>
<dbReference type="FunFam" id="3.90.470.10:FF:000011">
    <property type="entry name" value="50S ribosomal protein L22"/>
    <property type="match status" value="1"/>
</dbReference>
<dbReference type="Gene3D" id="3.90.470.10">
    <property type="entry name" value="Ribosomal protein L22/L17"/>
    <property type="match status" value="1"/>
</dbReference>
<dbReference type="HAMAP" id="MF_01331_B">
    <property type="entry name" value="Ribosomal_uL22_B"/>
    <property type="match status" value="1"/>
</dbReference>
<dbReference type="InterPro" id="IPR001063">
    <property type="entry name" value="Ribosomal_uL22"/>
</dbReference>
<dbReference type="InterPro" id="IPR005727">
    <property type="entry name" value="Ribosomal_uL22_bac/chlpt-type"/>
</dbReference>
<dbReference type="InterPro" id="IPR047867">
    <property type="entry name" value="Ribosomal_uL22_bac/org-type"/>
</dbReference>
<dbReference type="InterPro" id="IPR018260">
    <property type="entry name" value="Ribosomal_uL22_CS"/>
</dbReference>
<dbReference type="InterPro" id="IPR036394">
    <property type="entry name" value="Ribosomal_uL22_sf"/>
</dbReference>
<dbReference type="NCBIfam" id="TIGR01044">
    <property type="entry name" value="rplV_bact"/>
    <property type="match status" value="1"/>
</dbReference>
<dbReference type="PANTHER" id="PTHR13501">
    <property type="entry name" value="CHLOROPLAST 50S RIBOSOMAL PROTEIN L22-RELATED"/>
    <property type="match status" value="1"/>
</dbReference>
<dbReference type="PANTHER" id="PTHR13501:SF8">
    <property type="entry name" value="LARGE RIBOSOMAL SUBUNIT PROTEIN UL22M"/>
    <property type="match status" value="1"/>
</dbReference>
<dbReference type="Pfam" id="PF00237">
    <property type="entry name" value="Ribosomal_L22"/>
    <property type="match status" value="1"/>
</dbReference>
<dbReference type="SUPFAM" id="SSF54843">
    <property type="entry name" value="Ribosomal protein L22"/>
    <property type="match status" value="1"/>
</dbReference>
<dbReference type="PROSITE" id="PS00464">
    <property type="entry name" value="RIBOSOMAL_L22"/>
    <property type="match status" value="1"/>
</dbReference>
<organism>
    <name type="scientific">Carboxydothermus hydrogenoformans (strain ATCC BAA-161 / DSM 6008 / Z-2901)</name>
    <dbReference type="NCBI Taxonomy" id="246194"/>
    <lineage>
        <taxon>Bacteria</taxon>
        <taxon>Bacillati</taxon>
        <taxon>Bacillota</taxon>
        <taxon>Clostridia</taxon>
        <taxon>Thermoanaerobacterales</taxon>
        <taxon>Thermoanaerobacteraceae</taxon>
        <taxon>Carboxydothermus</taxon>
    </lineage>
</organism>
<protein>
    <recommendedName>
        <fullName evidence="1">Large ribosomal subunit protein uL22</fullName>
    </recommendedName>
    <alternativeName>
        <fullName evidence="2">50S ribosomal protein L22</fullName>
    </alternativeName>
</protein>
<evidence type="ECO:0000255" key="1">
    <source>
        <dbReference type="HAMAP-Rule" id="MF_01331"/>
    </source>
</evidence>
<evidence type="ECO:0000305" key="2"/>
<keyword id="KW-1185">Reference proteome</keyword>
<keyword id="KW-0687">Ribonucleoprotein</keyword>
<keyword id="KW-0689">Ribosomal protein</keyword>
<keyword id="KW-0694">RNA-binding</keyword>
<keyword id="KW-0699">rRNA-binding</keyword>
<name>RL22_CARHZ</name>